<feature type="chain" id="PRO_0000462362" description="UDP-glucosyl transferase 79L3">
    <location>
        <begin position="1"/>
        <end position="437"/>
    </location>
</feature>
<feature type="active site" description="Proton acceptor" evidence="1">
    <location>
        <position position="18"/>
    </location>
</feature>
<feature type="active site" description="Charge relay" evidence="1">
    <location>
        <position position="117"/>
    </location>
</feature>
<feature type="binding site" evidence="2">
    <location>
        <position position="254"/>
    </location>
    <ligand>
        <name>UDP</name>
        <dbReference type="ChEBI" id="CHEBI:58223"/>
    </ligand>
</feature>
<feature type="binding site" evidence="2">
    <location>
        <position position="312"/>
    </location>
    <ligand>
        <name>UDP</name>
        <dbReference type="ChEBI" id="CHEBI:58223"/>
    </ligand>
</feature>
<feature type="binding site" evidence="2">
    <location>
        <position position="313"/>
    </location>
    <ligand>
        <name>UDP</name>
        <dbReference type="ChEBI" id="CHEBI:58223"/>
    </ligand>
</feature>
<feature type="binding site" evidence="2">
    <location>
        <position position="330"/>
    </location>
    <ligand>
        <name>UDP</name>
        <dbReference type="ChEBI" id="CHEBI:58223"/>
    </ligand>
</feature>
<feature type="binding site" evidence="2">
    <location>
        <position position="335"/>
    </location>
    <ligand>
        <name>UDP</name>
        <dbReference type="ChEBI" id="CHEBI:58223"/>
    </ligand>
</feature>
<feature type="binding site" evidence="2">
    <location>
        <position position="338"/>
    </location>
    <ligand>
        <name>UDP</name>
        <dbReference type="ChEBI" id="CHEBI:58223"/>
    </ligand>
</feature>
<dbReference type="EC" id="2.4.1.-" evidence="3"/>
<dbReference type="EMBL" id="OR426397">
    <property type="protein sequence ID" value="WWM48150.1"/>
    <property type="molecule type" value="mRNA"/>
</dbReference>
<dbReference type="EMBL" id="JBDFQZ010000002">
    <property type="protein sequence ID" value="KAK9748391.1"/>
    <property type="molecule type" value="Genomic_DNA"/>
</dbReference>
<dbReference type="UniPathway" id="UPA00213"/>
<dbReference type="Proteomes" id="UP001443914">
    <property type="component" value="Unassembled WGS sequence"/>
</dbReference>
<dbReference type="GO" id="GO:0035251">
    <property type="term" value="F:UDP-glucosyltransferase activity"/>
    <property type="evidence" value="ECO:0007669"/>
    <property type="project" value="InterPro"/>
</dbReference>
<dbReference type="GO" id="GO:0008194">
    <property type="term" value="F:UDP-glycosyltransferase activity"/>
    <property type="evidence" value="ECO:0000314"/>
    <property type="project" value="UniProtKB"/>
</dbReference>
<dbReference type="GO" id="GO:0070085">
    <property type="term" value="P:glycosylation"/>
    <property type="evidence" value="ECO:0000314"/>
    <property type="project" value="UniProtKB"/>
</dbReference>
<dbReference type="GO" id="GO:0016135">
    <property type="term" value="P:saponin biosynthetic process"/>
    <property type="evidence" value="ECO:0000314"/>
    <property type="project" value="UniProtKB"/>
</dbReference>
<dbReference type="GO" id="GO:0016104">
    <property type="term" value="P:triterpenoid biosynthetic process"/>
    <property type="evidence" value="ECO:0000314"/>
    <property type="project" value="UniProtKB"/>
</dbReference>
<dbReference type="CDD" id="cd03784">
    <property type="entry name" value="GT1_Gtf-like"/>
    <property type="match status" value="1"/>
</dbReference>
<dbReference type="FunFam" id="3.40.50.2000:FF:000037">
    <property type="entry name" value="Glycosyltransferase"/>
    <property type="match status" value="1"/>
</dbReference>
<dbReference type="Gene3D" id="3.40.50.2000">
    <property type="entry name" value="Glycogen Phosphorylase B"/>
    <property type="match status" value="2"/>
</dbReference>
<dbReference type="InterPro" id="IPR050481">
    <property type="entry name" value="UDP-glycosyltransf_plant"/>
</dbReference>
<dbReference type="InterPro" id="IPR002213">
    <property type="entry name" value="UDP_glucos_trans"/>
</dbReference>
<dbReference type="InterPro" id="IPR035595">
    <property type="entry name" value="UDP_glycos_trans_CS"/>
</dbReference>
<dbReference type="PANTHER" id="PTHR48049">
    <property type="entry name" value="GLYCOSYLTRANSFERASE"/>
    <property type="match status" value="1"/>
</dbReference>
<dbReference type="PANTHER" id="PTHR48049:SF91">
    <property type="entry name" value="UDP-GLYCOSYLTRANSFERASE 79B7-RELATED"/>
    <property type="match status" value="1"/>
</dbReference>
<dbReference type="Pfam" id="PF00201">
    <property type="entry name" value="UDPGT"/>
    <property type="match status" value="1"/>
</dbReference>
<dbReference type="SUPFAM" id="SSF53756">
    <property type="entry name" value="UDP-Glycosyltransferase/glycogen phosphorylase"/>
    <property type="match status" value="1"/>
</dbReference>
<dbReference type="PROSITE" id="PS00375">
    <property type="entry name" value="UDPGT"/>
    <property type="match status" value="1"/>
</dbReference>
<name>GT793_SAPOF</name>
<evidence type="ECO:0000250" key="1">
    <source>
        <dbReference type="UniProtKB" id="A0A0A1HA03"/>
    </source>
</evidence>
<evidence type="ECO:0000250" key="2">
    <source>
        <dbReference type="UniProtKB" id="Q9M156"/>
    </source>
</evidence>
<evidence type="ECO:0000269" key="3">
    <source>
    </source>
</evidence>
<evidence type="ECO:0000303" key="4">
    <source>
    </source>
</evidence>
<evidence type="ECO:0000305" key="5"/>
<evidence type="ECO:0000312" key="6">
    <source>
        <dbReference type="EMBL" id="KAK9748391.1"/>
    </source>
</evidence>
<evidence type="ECO:0000312" key="7">
    <source>
        <dbReference type="EMBL" id="WWM48150.1"/>
    </source>
</evidence>
<accession>A0AAW1MQS1</accession>
<gene>
    <name evidence="4" type="primary">UGT79L3</name>
    <name evidence="4" type="synonym">Saoffv11006237m</name>
    <name evidence="6" type="ORF">RND81_02G054000</name>
</gene>
<reference evidence="7" key="1">
    <citation type="journal article" date="2025" name="Nat. Chem. Biol.">
        <title>Unlocking saponin biosynthesis in soapwort.</title>
        <authorList>
            <person name="Jo S."/>
            <person name="El-Demerdash A."/>
            <person name="Owen C."/>
            <person name="Srivastava V."/>
            <person name="Wu D."/>
            <person name="Kikuchi S."/>
            <person name="Reed J."/>
            <person name="Hodgson H."/>
            <person name="Harkess A."/>
            <person name="Shu S."/>
            <person name="Plott C."/>
            <person name="Jenkins J."/>
            <person name="Williams M."/>
            <person name="Boston L.-B."/>
            <person name="Lacchini E."/>
            <person name="Qu T."/>
            <person name="Goossens A."/>
            <person name="Grimwood J."/>
            <person name="Schmutz J."/>
            <person name="Leebens-Mack J."/>
            <person name="Osbourn A."/>
        </authorList>
    </citation>
    <scope>NUCLEOTIDE SEQUENCE [MRNA]</scope>
    <scope>FUNCTION</scope>
    <scope>CATALYTIC ACTIVITY</scope>
    <scope>TISSUE SPECIFICITY</scope>
    <scope>PATHWAY</scope>
    <scope>BIOTECHNOLOGY</scope>
</reference>
<reference evidence="6" key="2">
    <citation type="submission" date="2024-03" db="EMBL/GenBank/DDBJ databases">
        <title>WGS assembly of Saponaria officinalis var. Norfolk2.</title>
        <authorList>
            <person name="Jenkins J."/>
            <person name="Shu S."/>
            <person name="Grimwood J."/>
            <person name="Barry K."/>
            <person name="Goodstein D."/>
            <person name="Schmutz J."/>
            <person name="Leebens-Mack J."/>
            <person name="Osbourn A."/>
        </authorList>
    </citation>
    <scope>NUCLEOTIDE SEQUENCE [LARGE SCALE GENOMIC DNA]</scope>
    <source>
        <strain>cv. Norfolk2</strain>
        <tissue>Leaf</tissue>
    </source>
</reference>
<protein>
    <recommendedName>
        <fullName evidence="4">UDP-glucosyl transferase 79L3</fullName>
        <shortName evidence="4">SoUGT79L3</shortName>
        <ecNumber evidence="3">2.4.1.-</ecNumber>
    </recommendedName>
</protein>
<sequence>MGTKELHIVMYPWLAFGHFIPYLHLSNKLAQKGHKITFLLPHRAKLQLDSQNLYPSLITLVPITVPQVDTLPLGAESTADIPLSQHGDLSIAMDRTRPEIESILSKLDPKPDLIFFDMAQWVPVIASKLGIKSVSYNIVCAISLDLVRDWYKKDDGSNVPSWTLKHDKSSHFGENISILERALIALGTPDAIGIRSCREIEGEYCDSIAERFKKPVLLSGTTLPEPSDDPLDPKWVKWLGKFEEGSVIFCCLGSQHVLDKPQLQELALGLEMTGLPFFLAIKPPLGYATLDEVLPEGFSERVRDRGVAHGGWVQQPQMLAHPSVGCFLCHCGSSSMWEALVSDTQLVLFPQIPDQALNAVLMADKLKVGVKVEREDDGGVSKEVWSRAIKSVMDKESEIAAEVKKNHTKWRDMLINEEFVNGYIDSFIKDLQDLVEK</sequence>
<comment type="function">
    <text evidence="3">Component of the oleanane-type triterpene saponins (e.g. saponarioside A and saponarioside B) biosynthetic pathway, leading to the production of natural products with detergent properties used as traditional sources of soap (PubMed:39043959). A glycosyltransferase that mediates the conversion of QA-triFR to QA-triFRX via the elongation of the C-28 sugar chain with a D-xylose (PubMed:39043959).</text>
</comment>
<comment type="pathway">
    <text evidence="3">Secondary metabolite biosynthesis; terpenoid biosynthesis.</text>
</comment>
<comment type="tissue specificity">
    <text evidence="3">Mainly expressed in flowers, flower buds and young leaves, and, to a lesser extent, in old leaves, stems and roots.</text>
</comment>
<comment type="biotechnology">
    <text evidence="4">Soapwort saponins possess anticancer properties and are also being explored as enhancers for endosomal escape in targeted tumor therapies (PubMed:39043959). They may also serve as precursors for vaccine adjuvants (PubMed:39043959).</text>
</comment>
<comment type="similarity">
    <text evidence="5">Belongs to the UDP-glycosyltransferase family.</text>
</comment>
<organism>
    <name type="scientific">Saponaria officinalis</name>
    <name type="common">Common soapwort</name>
    <name type="synonym">Lychnis saponaria</name>
    <dbReference type="NCBI Taxonomy" id="3572"/>
    <lineage>
        <taxon>Eukaryota</taxon>
        <taxon>Viridiplantae</taxon>
        <taxon>Streptophyta</taxon>
        <taxon>Embryophyta</taxon>
        <taxon>Tracheophyta</taxon>
        <taxon>Spermatophyta</taxon>
        <taxon>Magnoliopsida</taxon>
        <taxon>eudicotyledons</taxon>
        <taxon>Gunneridae</taxon>
        <taxon>Pentapetalae</taxon>
        <taxon>Caryophyllales</taxon>
        <taxon>Caryophyllaceae</taxon>
        <taxon>Caryophylleae</taxon>
        <taxon>Saponaria</taxon>
    </lineage>
</organism>
<keyword id="KW-0328">Glycosyltransferase</keyword>
<keyword id="KW-0808">Transferase</keyword>
<proteinExistence type="evidence at protein level"/>